<sequence length="346" mass="39412">MNKKRVLTGDRPTGKLHLGHWIGSIMNRLQLQNDPRYDCFFIIADLHTLTTKTRKEEVLHIDSHIYDVLADWLSVGIDPEKSAIYLQSAIPEIYELNLLFSMLTPLNHIMGIPSIKEMARNASINEESLSHGLIGYPVLQSADILLAKAHLVPVGKDNEAHVELTRDIAKTFNRLYGSVFPEPDILQGELTSLVGTNGQGKMSKSANNAIYLSDDEKTVQEKIRKMYTDPNRVHATTPGRVEGNPLFIYHDLFNPHKEEVEEFKTRYRQGCIKDVEVKARLAEEINLFLNPFREKRSEFVAQPKILEEALQKGTEKMRSVARETMEEVHNNLGLSRKWRSILASSK</sequence>
<accession>Q9PJF5</accession>
<gene>
    <name evidence="1" type="primary">trpS</name>
    <name type="ordered locus">TC_0874</name>
</gene>
<organism>
    <name type="scientific">Chlamydia muridarum (strain MoPn / Nigg)</name>
    <dbReference type="NCBI Taxonomy" id="243161"/>
    <lineage>
        <taxon>Bacteria</taxon>
        <taxon>Pseudomonadati</taxon>
        <taxon>Chlamydiota</taxon>
        <taxon>Chlamydiia</taxon>
        <taxon>Chlamydiales</taxon>
        <taxon>Chlamydiaceae</taxon>
        <taxon>Chlamydia/Chlamydophila group</taxon>
        <taxon>Chlamydia</taxon>
    </lineage>
</organism>
<evidence type="ECO:0000255" key="1">
    <source>
        <dbReference type="HAMAP-Rule" id="MF_00140"/>
    </source>
</evidence>
<name>SYW_CHLMU</name>
<comment type="function">
    <text evidence="1">Catalyzes the attachment of tryptophan to tRNA(Trp).</text>
</comment>
<comment type="catalytic activity">
    <reaction evidence="1">
        <text>tRNA(Trp) + L-tryptophan + ATP = L-tryptophyl-tRNA(Trp) + AMP + diphosphate + H(+)</text>
        <dbReference type="Rhea" id="RHEA:24080"/>
        <dbReference type="Rhea" id="RHEA-COMP:9671"/>
        <dbReference type="Rhea" id="RHEA-COMP:9705"/>
        <dbReference type="ChEBI" id="CHEBI:15378"/>
        <dbReference type="ChEBI" id="CHEBI:30616"/>
        <dbReference type="ChEBI" id="CHEBI:33019"/>
        <dbReference type="ChEBI" id="CHEBI:57912"/>
        <dbReference type="ChEBI" id="CHEBI:78442"/>
        <dbReference type="ChEBI" id="CHEBI:78535"/>
        <dbReference type="ChEBI" id="CHEBI:456215"/>
        <dbReference type="EC" id="6.1.1.2"/>
    </reaction>
</comment>
<comment type="subunit">
    <text evidence="1">Homodimer.</text>
</comment>
<comment type="subcellular location">
    <subcellularLocation>
        <location evidence="1">Cytoplasm</location>
    </subcellularLocation>
</comment>
<comment type="similarity">
    <text evidence="1">Belongs to the class-I aminoacyl-tRNA synthetase family.</text>
</comment>
<reference key="1">
    <citation type="journal article" date="2000" name="Nucleic Acids Res.">
        <title>Genome sequences of Chlamydia trachomatis MoPn and Chlamydia pneumoniae AR39.</title>
        <authorList>
            <person name="Read T.D."/>
            <person name="Brunham R.C."/>
            <person name="Shen C."/>
            <person name="Gill S.R."/>
            <person name="Heidelberg J.F."/>
            <person name="White O."/>
            <person name="Hickey E.K."/>
            <person name="Peterson J.D."/>
            <person name="Utterback T.R."/>
            <person name="Berry K.J."/>
            <person name="Bass S."/>
            <person name="Linher K.D."/>
            <person name="Weidman J.F."/>
            <person name="Khouri H.M."/>
            <person name="Craven B."/>
            <person name="Bowman C."/>
            <person name="Dodson R.J."/>
            <person name="Gwinn M.L."/>
            <person name="Nelson W.C."/>
            <person name="DeBoy R.T."/>
            <person name="Kolonay J.F."/>
            <person name="McClarty G."/>
            <person name="Salzberg S.L."/>
            <person name="Eisen J.A."/>
            <person name="Fraser C.M."/>
        </authorList>
    </citation>
    <scope>NUCLEOTIDE SEQUENCE [LARGE SCALE GENOMIC DNA]</scope>
    <source>
        <strain>MoPn / Nigg</strain>
    </source>
</reference>
<keyword id="KW-0030">Aminoacyl-tRNA synthetase</keyword>
<keyword id="KW-0067">ATP-binding</keyword>
<keyword id="KW-0963">Cytoplasm</keyword>
<keyword id="KW-0436">Ligase</keyword>
<keyword id="KW-0547">Nucleotide-binding</keyword>
<keyword id="KW-0648">Protein biosynthesis</keyword>
<dbReference type="EC" id="6.1.1.2" evidence="1"/>
<dbReference type="EMBL" id="AE002160">
    <property type="protein sequence ID" value="AAF39670.1"/>
    <property type="molecule type" value="Genomic_DNA"/>
</dbReference>
<dbReference type="PIR" id="C81654">
    <property type="entry name" value="C81654"/>
</dbReference>
<dbReference type="RefSeq" id="WP_010231815.1">
    <property type="nucleotide sequence ID" value="NZ_CP063055.1"/>
</dbReference>
<dbReference type="SMR" id="Q9PJF5"/>
<dbReference type="GeneID" id="1246242"/>
<dbReference type="KEGG" id="cmu:TC_0874"/>
<dbReference type="eggNOG" id="COG0180">
    <property type="taxonomic scope" value="Bacteria"/>
</dbReference>
<dbReference type="HOGENOM" id="CLU_029244_0_1_0"/>
<dbReference type="OrthoDB" id="9801042at2"/>
<dbReference type="Proteomes" id="UP000000800">
    <property type="component" value="Chromosome"/>
</dbReference>
<dbReference type="GO" id="GO:0005829">
    <property type="term" value="C:cytosol"/>
    <property type="evidence" value="ECO:0007669"/>
    <property type="project" value="TreeGrafter"/>
</dbReference>
<dbReference type="GO" id="GO:0005524">
    <property type="term" value="F:ATP binding"/>
    <property type="evidence" value="ECO:0007669"/>
    <property type="project" value="UniProtKB-UniRule"/>
</dbReference>
<dbReference type="GO" id="GO:0004830">
    <property type="term" value="F:tryptophan-tRNA ligase activity"/>
    <property type="evidence" value="ECO:0007669"/>
    <property type="project" value="UniProtKB-UniRule"/>
</dbReference>
<dbReference type="GO" id="GO:0006436">
    <property type="term" value="P:tryptophanyl-tRNA aminoacylation"/>
    <property type="evidence" value="ECO:0007669"/>
    <property type="project" value="UniProtKB-UniRule"/>
</dbReference>
<dbReference type="CDD" id="cd00806">
    <property type="entry name" value="TrpRS_core"/>
    <property type="match status" value="1"/>
</dbReference>
<dbReference type="FunFam" id="1.10.240.10:FF:000005">
    <property type="entry name" value="Tryptophan--tRNA ligase"/>
    <property type="match status" value="1"/>
</dbReference>
<dbReference type="Gene3D" id="3.40.50.620">
    <property type="entry name" value="HUPs"/>
    <property type="match status" value="1"/>
</dbReference>
<dbReference type="Gene3D" id="1.10.240.10">
    <property type="entry name" value="Tyrosyl-Transfer RNA Synthetase"/>
    <property type="match status" value="1"/>
</dbReference>
<dbReference type="HAMAP" id="MF_00140_B">
    <property type="entry name" value="Trp_tRNA_synth_B"/>
    <property type="match status" value="1"/>
</dbReference>
<dbReference type="InterPro" id="IPR002305">
    <property type="entry name" value="aa-tRNA-synth_Ic"/>
</dbReference>
<dbReference type="InterPro" id="IPR014729">
    <property type="entry name" value="Rossmann-like_a/b/a_fold"/>
</dbReference>
<dbReference type="InterPro" id="IPR002306">
    <property type="entry name" value="Trp-tRNA-ligase"/>
</dbReference>
<dbReference type="InterPro" id="IPR024109">
    <property type="entry name" value="Trp-tRNA-ligase_bac-type"/>
</dbReference>
<dbReference type="InterPro" id="IPR050203">
    <property type="entry name" value="Trp-tRNA_synthetase"/>
</dbReference>
<dbReference type="NCBIfam" id="TIGR00233">
    <property type="entry name" value="trpS"/>
    <property type="match status" value="1"/>
</dbReference>
<dbReference type="PANTHER" id="PTHR43766">
    <property type="entry name" value="TRYPTOPHAN--TRNA LIGASE, MITOCHONDRIAL"/>
    <property type="match status" value="1"/>
</dbReference>
<dbReference type="PANTHER" id="PTHR43766:SF1">
    <property type="entry name" value="TRYPTOPHAN--TRNA LIGASE, MITOCHONDRIAL"/>
    <property type="match status" value="1"/>
</dbReference>
<dbReference type="Pfam" id="PF00579">
    <property type="entry name" value="tRNA-synt_1b"/>
    <property type="match status" value="1"/>
</dbReference>
<dbReference type="PRINTS" id="PR01039">
    <property type="entry name" value="TRNASYNTHTRP"/>
</dbReference>
<dbReference type="SUPFAM" id="SSF52374">
    <property type="entry name" value="Nucleotidylyl transferase"/>
    <property type="match status" value="1"/>
</dbReference>
<proteinExistence type="inferred from homology"/>
<feature type="chain" id="PRO_0000136618" description="Tryptophan--tRNA ligase">
    <location>
        <begin position="1"/>
        <end position="346"/>
    </location>
</feature>
<feature type="short sequence motif" description="'HIGH' region" evidence="1">
    <location>
        <begin position="12"/>
        <end position="20"/>
    </location>
</feature>
<feature type="short sequence motif" description="'KMSKS' region" evidence="1">
    <location>
        <begin position="201"/>
        <end position="205"/>
    </location>
</feature>
<feature type="binding site" evidence="1">
    <location>
        <begin position="11"/>
        <end position="13"/>
    </location>
    <ligand>
        <name>ATP</name>
        <dbReference type="ChEBI" id="CHEBI:30616"/>
    </ligand>
</feature>
<feature type="binding site" evidence="1">
    <location>
        <begin position="19"/>
        <end position="20"/>
    </location>
    <ligand>
        <name>ATP</name>
        <dbReference type="ChEBI" id="CHEBI:30616"/>
    </ligand>
</feature>
<feature type="binding site" evidence="1">
    <location>
        <position position="143"/>
    </location>
    <ligand>
        <name>L-tryptophan</name>
        <dbReference type="ChEBI" id="CHEBI:57912"/>
    </ligand>
</feature>
<feature type="binding site" evidence="1">
    <location>
        <begin position="155"/>
        <end position="157"/>
    </location>
    <ligand>
        <name>ATP</name>
        <dbReference type="ChEBI" id="CHEBI:30616"/>
    </ligand>
</feature>
<feature type="binding site" evidence="1">
    <location>
        <position position="193"/>
    </location>
    <ligand>
        <name>ATP</name>
        <dbReference type="ChEBI" id="CHEBI:30616"/>
    </ligand>
</feature>
<feature type="binding site" evidence="1">
    <location>
        <begin position="201"/>
        <end position="205"/>
    </location>
    <ligand>
        <name>ATP</name>
        <dbReference type="ChEBI" id="CHEBI:30616"/>
    </ligand>
</feature>
<protein>
    <recommendedName>
        <fullName evidence="1">Tryptophan--tRNA ligase</fullName>
        <ecNumber evidence="1">6.1.1.2</ecNumber>
    </recommendedName>
    <alternativeName>
        <fullName evidence="1">Tryptophanyl-tRNA synthetase</fullName>
        <shortName evidence="1">TrpRS</shortName>
    </alternativeName>
</protein>